<organism>
    <name type="scientific">Bacillus subtilis (strain 168)</name>
    <dbReference type="NCBI Taxonomy" id="224308"/>
    <lineage>
        <taxon>Bacteria</taxon>
        <taxon>Bacillati</taxon>
        <taxon>Bacillota</taxon>
        <taxon>Bacilli</taxon>
        <taxon>Bacillales</taxon>
        <taxon>Bacillaceae</taxon>
        <taxon>Bacillus</taxon>
    </lineage>
</organism>
<name>EPSD_BACSU</name>
<protein>
    <recommendedName>
        <fullName>Putative glycosyltransferase EpsD</fullName>
        <ecNumber>2.4.-.-</ecNumber>
    </recommendedName>
</protein>
<reference key="1">
    <citation type="journal article" date="1996" name="Microbiology">
        <title>Integrated mapping and sequencing of a 115 kb DNA fragment from Bacillus subtilis: sequence analysis of a 21 kb segment containing the sigL locus.</title>
        <authorList>
            <person name="Fabret C."/>
            <person name="Quentin Y."/>
            <person name="Chapal N."/>
            <person name="Guiseppi A."/>
            <person name="Haiech J."/>
            <person name="Denizot F."/>
        </authorList>
    </citation>
    <scope>NUCLEOTIDE SEQUENCE [GENOMIC DNA]</scope>
    <source>
        <strain>168trp</strain>
    </source>
</reference>
<reference key="2">
    <citation type="submission" date="1997-04" db="EMBL/GenBank/DDBJ databases">
        <authorList>
            <person name="Denizot F."/>
        </authorList>
    </citation>
    <scope>NUCLEOTIDE SEQUENCE [GENOMIC DNA]</scope>
</reference>
<reference key="3">
    <citation type="journal article" date="1997" name="Nature">
        <title>The complete genome sequence of the Gram-positive bacterium Bacillus subtilis.</title>
        <authorList>
            <person name="Kunst F."/>
            <person name="Ogasawara N."/>
            <person name="Moszer I."/>
            <person name="Albertini A.M."/>
            <person name="Alloni G."/>
            <person name="Azevedo V."/>
            <person name="Bertero M.G."/>
            <person name="Bessieres P."/>
            <person name="Bolotin A."/>
            <person name="Borchert S."/>
            <person name="Borriss R."/>
            <person name="Boursier L."/>
            <person name="Brans A."/>
            <person name="Braun M."/>
            <person name="Brignell S.C."/>
            <person name="Bron S."/>
            <person name="Brouillet S."/>
            <person name="Bruschi C.V."/>
            <person name="Caldwell B."/>
            <person name="Capuano V."/>
            <person name="Carter N.M."/>
            <person name="Choi S.-K."/>
            <person name="Codani J.-J."/>
            <person name="Connerton I.F."/>
            <person name="Cummings N.J."/>
            <person name="Daniel R.A."/>
            <person name="Denizot F."/>
            <person name="Devine K.M."/>
            <person name="Duesterhoeft A."/>
            <person name="Ehrlich S.D."/>
            <person name="Emmerson P.T."/>
            <person name="Entian K.-D."/>
            <person name="Errington J."/>
            <person name="Fabret C."/>
            <person name="Ferrari E."/>
            <person name="Foulger D."/>
            <person name="Fritz C."/>
            <person name="Fujita M."/>
            <person name="Fujita Y."/>
            <person name="Fuma S."/>
            <person name="Galizzi A."/>
            <person name="Galleron N."/>
            <person name="Ghim S.-Y."/>
            <person name="Glaser P."/>
            <person name="Goffeau A."/>
            <person name="Golightly E.J."/>
            <person name="Grandi G."/>
            <person name="Guiseppi G."/>
            <person name="Guy B.J."/>
            <person name="Haga K."/>
            <person name="Haiech J."/>
            <person name="Harwood C.R."/>
            <person name="Henaut A."/>
            <person name="Hilbert H."/>
            <person name="Holsappel S."/>
            <person name="Hosono S."/>
            <person name="Hullo M.-F."/>
            <person name="Itaya M."/>
            <person name="Jones L.-M."/>
            <person name="Joris B."/>
            <person name="Karamata D."/>
            <person name="Kasahara Y."/>
            <person name="Klaerr-Blanchard M."/>
            <person name="Klein C."/>
            <person name="Kobayashi Y."/>
            <person name="Koetter P."/>
            <person name="Koningstein G."/>
            <person name="Krogh S."/>
            <person name="Kumano M."/>
            <person name="Kurita K."/>
            <person name="Lapidus A."/>
            <person name="Lardinois S."/>
            <person name="Lauber J."/>
            <person name="Lazarevic V."/>
            <person name="Lee S.-M."/>
            <person name="Levine A."/>
            <person name="Liu H."/>
            <person name="Masuda S."/>
            <person name="Mauel C."/>
            <person name="Medigue C."/>
            <person name="Medina N."/>
            <person name="Mellado R.P."/>
            <person name="Mizuno M."/>
            <person name="Moestl D."/>
            <person name="Nakai S."/>
            <person name="Noback M."/>
            <person name="Noone D."/>
            <person name="O'Reilly M."/>
            <person name="Ogawa K."/>
            <person name="Ogiwara A."/>
            <person name="Oudega B."/>
            <person name="Park S.-H."/>
            <person name="Parro V."/>
            <person name="Pohl T.M."/>
            <person name="Portetelle D."/>
            <person name="Porwollik S."/>
            <person name="Prescott A.M."/>
            <person name="Presecan E."/>
            <person name="Pujic P."/>
            <person name="Purnelle B."/>
            <person name="Rapoport G."/>
            <person name="Rey M."/>
            <person name="Reynolds S."/>
            <person name="Rieger M."/>
            <person name="Rivolta C."/>
            <person name="Rocha E."/>
            <person name="Roche B."/>
            <person name="Rose M."/>
            <person name="Sadaie Y."/>
            <person name="Sato T."/>
            <person name="Scanlan E."/>
            <person name="Schleich S."/>
            <person name="Schroeter R."/>
            <person name="Scoffone F."/>
            <person name="Sekiguchi J."/>
            <person name="Sekowska A."/>
            <person name="Seror S.J."/>
            <person name="Serror P."/>
            <person name="Shin B.-S."/>
            <person name="Soldo B."/>
            <person name="Sorokin A."/>
            <person name="Tacconi E."/>
            <person name="Takagi T."/>
            <person name="Takahashi H."/>
            <person name="Takemaru K."/>
            <person name="Takeuchi M."/>
            <person name="Tamakoshi A."/>
            <person name="Tanaka T."/>
            <person name="Terpstra P."/>
            <person name="Tognoni A."/>
            <person name="Tosato V."/>
            <person name="Uchiyama S."/>
            <person name="Vandenbol M."/>
            <person name="Vannier F."/>
            <person name="Vassarotti A."/>
            <person name="Viari A."/>
            <person name="Wambutt R."/>
            <person name="Wedler E."/>
            <person name="Wedler H."/>
            <person name="Weitzenegger T."/>
            <person name="Winters P."/>
            <person name="Wipat A."/>
            <person name="Yamamoto H."/>
            <person name="Yamane K."/>
            <person name="Yasumoto K."/>
            <person name="Yata K."/>
            <person name="Yoshida K."/>
            <person name="Yoshikawa H.-F."/>
            <person name="Zumstein E."/>
            <person name="Yoshikawa H."/>
            <person name="Danchin A."/>
        </authorList>
    </citation>
    <scope>NUCLEOTIDE SEQUENCE [LARGE SCALE GENOMIC DNA]</scope>
    <source>
        <strain>168</strain>
    </source>
</reference>
<reference key="4">
    <citation type="journal article" date="2004" name="J. Bacteriol.">
        <title>Genes involved in formation of structured multicellular communities by Bacillus subtilis.</title>
        <authorList>
            <person name="Branda S.S."/>
            <person name="Gonzalez-Pastor J.E."/>
            <person name="Dervyn E."/>
            <person name="Ehrlich S.D."/>
            <person name="Losick R."/>
            <person name="Kolter R."/>
        </authorList>
    </citation>
    <scope>PROBABLE FUNCTION</scope>
</reference>
<reference key="5">
    <citation type="journal article" date="2005" name="Mol. Microbiol.">
        <title>A master regulator for biofilm formation by Bacillus subtilis.</title>
        <authorList>
            <person name="Kearns D.B."/>
            <person name="Chu F."/>
            <person name="Branda S.S."/>
            <person name="Kolter R."/>
            <person name="Losick R."/>
        </authorList>
    </citation>
    <scope>PROBABLE FUNCTION</scope>
    <scope>INDUCTION</scope>
    <scope>NOMENCLATURE</scope>
</reference>
<keyword id="KW-0270">Exopolysaccharide synthesis</keyword>
<keyword id="KW-0328">Glycosyltransferase</keyword>
<keyword id="KW-1185">Reference proteome</keyword>
<keyword id="KW-0808">Transferase</keyword>
<feature type="chain" id="PRO_0000360791" description="Putative glycosyltransferase EpsD">
    <location>
        <begin position="1"/>
        <end position="381"/>
    </location>
</feature>
<sequence>MTKKILFCATVDYHFKAFHLPYFKWFKQMGWEVHVAANGQTKLPYVDEKFSIPIRRSPFDPQNLAVYRQLKKVIDTYEYDIVHCHTPVGGVLARLAARQARRHGTKVLYTAHGFHFCKGAPMKNWLLYYPVEKWLSAYTDCLITINEEDYIRAKGLQRPGGRTQKIHGIGVNTERFRPVSPIEQQRLREKHGFREDDFILVYPAELNLNKNQKQLIEAAALLKEKIPSLRLVFAGEGAMEHTYQTLAEKLGASAHVCFYGFCSDIHELIQLADVSVASSIREGLGMNVLEGMAAEQPAIATDNRGHREIIRDGENGFLIKIGDSAAFARRIEQLYHKPELCRKLGQEGRKTALRFSEARTVEEMADIYSAYMDMDTKEKSV</sequence>
<comment type="function">
    <text>May be involved in the production of the exopolysaccharide (EPS) component of the extracellular matrix during biofilm formation. EPS is responsible for the adhesion of chains of cells into bundles. Required for biofilm maintenance.</text>
</comment>
<comment type="induction">
    <text evidence="1">Repressed by SinR.</text>
</comment>
<comment type="similarity">
    <text evidence="2">Belongs to the glycosyltransferase group 1 family. Glycosyltransferase 4 subfamily.</text>
</comment>
<proteinExistence type="evidence at transcript level"/>
<accession>P71053</accession>
<accession>O08172</accession>
<accession>Q795I2</accession>
<evidence type="ECO:0000269" key="1">
    <source>
    </source>
</evidence>
<evidence type="ECO:0000305" key="2"/>
<gene>
    <name type="primary">epsD</name>
    <name type="synonym">yveN</name>
    <name type="ordered locus">BSU34340</name>
</gene>
<dbReference type="EC" id="2.4.-.-"/>
<dbReference type="EMBL" id="Z71928">
    <property type="protein sequence ID" value="CAA96471.1"/>
    <property type="molecule type" value="Genomic_DNA"/>
</dbReference>
<dbReference type="EMBL" id="Z94043">
    <property type="protein sequence ID" value="CAB08026.1"/>
    <property type="molecule type" value="Genomic_DNA"/>
</dbReference>
<dbReference type="EMBL" id="AL009126">
    <property type="protein sequence ID" value="CAB15439.1"/>
    <property type="molecule type" value="Genomic_DNA"/>
</dbReference>
<dbReference type="PIR" id="C70036">
    <property type="entry name" value="C70036"/>
</dbReference>
<dbReference type="RefSeq" id="NP_391314.1">
    <property type="nucleotide sequence ID" value="NC_000964.3"/>
</dbReference>
<dbReference type="RefSeq" id="WP_003242735.1">
    <property type="nucleotide sequence ID" value="NZ_OZ025638.1"/>
</dbReference>
<dbReference type="SMR" id="P71053"/>
<dbReference type="FunCoup" id="P71053">
    <property type="interactions" value="16"/>
</dbReference>
<dbReference type="STRING" id="224308.BSU34340"/>
<dbReference type="CAZy" id="GT4">
    <property type="family name" value="Glycosyltransferase Family 4"/>
</dbReference>
<dbReference type="PaxDb" id="224308-BSU34340"/>
<dbReference type="DNASU" id="938611"/>
<dbReference type="EnsemblBacteria" id="CAB15439">
    <property type="protein sequence ID" value="CAB15439"/>
    <property type="gene ID" value="BSU_34340"/>
</dbReference>
<dbReference type="GeneID" id="938611"/>
<dbReference type="KEGG" id="bsu:BSU34340"/>
<dbReference type="PATRIC" id="fig|224308.179.peg.3720"/>
<dbReference type="eggNOG" id="COG0438">
    <property type="taxonomic scope" value="Bacteria"/>
</dbReference>
<dbReference type="InParanoid" id="P71053"/>
<dbReference type="OrthoDB" id="9806653at2"/>
<dbReference type="PhylomeDB" id="P71053"/>
<dbReference type="BioCyc" id="BSUB:BSU34340-MONOMER"/>
<dbReference type="Proteomes" id="UP000001570">
    <property type="component" value="Chromosome"/>
</dbReference>
<dbReference type="GO" id="GO:0016757">
    <property type="term" value="F:glycosyltransferase activity"/>
    <property type="evidence" value="ECO:0007669"/>
    <property type="project" value="UniProtKB-KW"/>
</dbReference>
<dbReference type="GO" id="GO:0000271">
    <property type="term" value="P:polysaccharide biosynthetic process"/>
    <property type="evidence" value="ECO:0007669"/>
    <property type="project" value="UniProtKB-KW"/>
</dbReference>
<dbReference type="CDD" id="cd03808">
    <property type="entry name" value="GT4_CapM-like"/>
    <property type="match status" value="1"/>
</dbReference>
<dbReference type="Gene3D" id="3.40.50.2000">
    <property type="entry name" value="Glycogen Phosphorylase B"/>
    <property type="match status" value="2"/>
</dbReference>
<dbReference type="InterPro" id="IPR001296">
    <property type="entry name" value="Glyco_trans_1"/>
</dbReference>
<dbReference type="InterPro" id="IPR028098">
    <property type="entry name" value="Glyco_trans_4-like_N"/>
</dbReference>
<dbReference type="InterPro" id="IPR050194">
    <property type="entry name" value="Glycosyltransferase_grp1"/>
</dbReference>
<dbReference type="PANTHER" id="PTHR45947">
    <property type="entry name" value="SULFOQUINOVOSYL TRANSFERASE SQD2"/>
    <property type="match status" value="1"/>
</dbReference>
<dbReference type="PANTHER" id="PTHR45947:SF3">
    <property type="entry name" value="SULFOQUINOVOSYL TRANSFERASE SQD2"/>
    <property type="match status" value="1"/>
</dbReference>
<dbReference type="Pfam" id="PF13439">
    <property type="entry name" value="Glyco_transf_4"/>
    <property type="match status" value="1"/>
</dbReference>
<dbReference type="Pfam" id="PF00534">
    <property type="entry name" value="Glycos_transf_1"/>
    <property type="match status" value="1"/>
</dbReference>
<dbReference type="SUPFAM" id="SSF53756">
    <property type="entry name" value="UDP-Glycosyltransferase/glycogen phosphorylase"/>
    <property type="match status" value="1"/>
</dbReference>